<evidence type="ECO:0000255" key="1">
    <source>
        <dbReference type="HAMAP-Rule" id="MF_01013"/>
    </source>
</evidence>
<organism>
    <name type="scientific">Burkholderia cenocepacia (strain HI2424)</name>
    <dbReference type="NCBI Taxonomy" id="331272"/>
    <lineage>
        <taxon>Bacteria</taxon>
        <taxon>Pseudomonadati</taxon>
        <taxon>Pseudomonadota</taxon>
        <taxon>Betaproteobacteria</taxon>
        <taxon>Burkholderiales</taxon>
        <taxon>Burkholderiaceae</taxon>
        <taxon>Burkholderia</taxon>
        <taxon>Burkholderia cepacia complex</taxon>
    </lineage>
</organism>
<dbReference type="EC" id="4.3.2.10" evidence="1"/>
<dbReference type="EMBL" id="CP000458">
    <property type="protein sequence ID" value="ABK07185.1"/>
    <property type="molecule type" value="Genomic_DNA"/>
</dbReference>
<dbReference type="RefSeq" id="WP_006751800.1">
    <property type="nucleotide sequence ID" value="NC_008542.1"/>
</dbReference>
<dbReference type="SMR" id="A0K3V8"/>
<dbReference type="GeneID" id="93084237"/>
<dbReference type="KEGG" id="bch:Bcen2424_0431"/>
<dbReference type="HOGENOM" id="CLU_048577_4_0_4"/>
<dbReference type="UniPathway" id="UPA00031">
    <property type="reaction ID" value="UER00010"/>
</dbReference>
<dbReference type="GO" id="GO:0005737">
    <property type="term" value="C:cytoplasm"/>
    <property type="evidence" value="ECO:0007669"/>
    <property type="project" value="UniProtKB-SubCell"/>
</dbReference>
<dbReference type="GO" id="GO:0000107">
    <property type="term" value="F:imidazoleglycerol-phosphate synthase activity"/>
    <property type="evidence" value="ECO:0007669"/>
    <property type="project" value="UniProtKB-UniRule"/>
</dbReference>
<dbReference type="GO" id="GO:0016829">
    <property type="term" value="F:lyase activity"/>
    <property type="evidence" value="ECO:0007669"/>
    <property type="project" value="UniProtKB-KW"/>
</dbReference>
<dbReference type="GO" id="GO:0000105">
    <property type="term" value="P:L-histidine biosynthetic process"/>
    <property type="evidence" value="ECO:0007669"/>
    <property type="project" value="UniProtKB-UniRule"/>
</dbReference>
<dbReference type="CDD" id="cd04731">
    <property type="entry name" value="HisF"/>
    <property type="match status" value="1"/>
</dbReference>
<dbReference type="FunFam" id="3.20.20.70:FF:000006">
    <property type="entry name" value="Imidazole glycerol phosphate synthase subunit HisF"/>
    <property type="match status" value="1"/>
</dbReference>
<dbReference type="Gene3D" id="3.20.20.70">
    <property type="entry name" value="Aldolase class I"/>
    <property type="match status" value="1"/>
</dbReference>
<dbReference type="HAMAP" id="MF_01013">
    <property type="entry name" value="HisF"/>
    <property type="match status" value="1"/>
</dbReference>
<dbReference type="InterPro" id="IPR013785">
    <property type="entry name" value="Aldolase_TIM"/>
</dbReference>
<dbReference type="InterPro" id="IPR006062">
    <property type="entry name" value="His_biosynth"/>
</dbReference>
<dbReference type="InterPro" id="IPR004651">
    <property type="entry name" value="HisF"/>
</dbReference>
<dbReference type="InterPro" id="IPR050064">
    <property type="entry name" value="IGPS_HisA/HisF"/>
</dbReference>
<dbReference type="InterPro" id="IPR011060">
    <property type="entry name" value="RibuloseP-bd_barrel"/>
</dbReference>
<dbReference type="NCBIfam" id="TIGR00735">
    <property type="entry name" value="hisF"/>
    <property type="match status" value="1"/>
</dbReference>
<dbReference type="PANTHER" id="PTHR21235:SF2">
    <property type="entry name" value="IMIDAZOLE GLYCEROL PHOSPHATE SYNTHASE HISHF"/>
    <property type="match status" value="1"/>
</dbReference>
<dbReference type="PANTHER" id="PTHR21235">
    <property type="entry name" value="IMIDAZOLE GLYCEROL PHOSPHATE SYNTHASE SUBUNIT HISF/H IGP SYNTHASE SUBUNIT HISF/H"/>
    <property type="match status" value="1"/>
</dbReference>
<dbReference type="Pfam" id="PF00977">
    <property type="entry name" value="His_biosynth"/>
    <property type="match status" value="1"/>
</dbReference>
<dbReference type="SUPFAM" id="SSF51366">
    <property type="entry name" value="Ribulose-phoshate binding barrel"/>
    <property type="match status" value="1"/>
</dbReference>
<name>HIS6_BURCH</name>
<comment type="function">
    <text evidence="1">IGPS catalyzes the conversion of PRFAR and glutamine to IGP, AICAR and glutamate. The HisF subunit catalyzes the cyclization activity that produces IGP and AICAR from PRFAR using the ammonia provided by the HisH subunit.</text>
</comment>
<comment type="catalytic activity">
    <reaction evidence="1">
        <text>5-[(5-phospho-1-deoxy-D-ribulos-1-ylimino)methylamino]-1-(5-phospho-beta-D-ribosyl)imidazole-4-carboxamide + L-glutamine = D-erythro-1-(imidazol-4-yl)glycerol 3-phosphate + 5-amino-1-(5-phospho-beta-D-ribosyl)imidazole-4-carboxamide + L-glutamate + H(+)</text>
        <dbReference type="Rhea" id="RHEA:24793"/>
        <dbReference type="ChEBI" id="CHEBI:15378"/>
        <dbReference type="ChEBI" id="CHEBI:29985"/>
        <dbReference type="ChEBI" id="CHEBI:58278"/>
        <dbReference type="ChEBI" id="CHEBI:58359"/>
        <dbReference type="ChEBI" id="CHEBI:58475"/>
        <dbReference type="ChEBI" id="CHEBI:58525"/>
        <dbReference type="EC" id="4.3.2.10"/>
    </reaction>
</comment>
<comment type="pathway">
    <text evidence="1">Amino-acid biosynthesis; L-histidine biosynthesis; L-histidine from 5-phospho-alpha-D-ribose 1-diphosphate: step 5/9.</text>
</comment>
<comment type="subunit">
    <text evidence="1">Heterodimer of HisH and HisF.</text>
</comment>
<comment type="subcellular location">
    <subcellularLocation>
        <location evidence="1">Cytoplasm</location>
    </subcellularLocation>
</comment>
<comment type="similarity">
    <text evidence="1">Belongs to the HisA/HisF family.</text>
</comment>
<accession>A0K3V8</accession>
<feature type="chain" id="PRO_1000063035" description="Imidazole glycerol phosphate synthase subunit HisF">
    <location>
        <begin position="1"/>
        <end position="257"/>
    </location>
</feature>
<feature type="active site" evidence="1">
    <location>
        <position position="12"/>
    </location>
</feature>
<feature type="active site" evidence="1">
    <location>
        <position position="131"/>
    </location>
</feature>
<reference key="1">
    <citation type="submission" date="2006-08" db="EMBL/GenBank/DDBJ databases">
        <title>Complete sequence of chromosome 1 of Burkholderia cenocepacia HI2424.</title>
        <authorList>
            <person name="Copeland A."/>
            <person name="Lucas S."/>
            <person name="Lapidus A."/>
            <person name="Barry K."/>
            <person name="Detter J.C."/>
            <person name="Glavina del Rio T."/>
            <person name="Hammon N."/>
            <person name="Israni S."/>
            <person name="Pitluck S."/>
            <person name="Chain P."/>
            <person name="Malfatti S."/>
            <person name="Shin M."/>
            <person name="Vergez L."/>
            <person name="Schmutz J."/>
            <person name="Larimer F."/>
            <person name="Land M."/>
            <person name="Hauser L."/>
            <person name="Kyrpides N."/>
            <person name="Kim E."/>
            <person name="LiPuma J.J."/>
            <person name="Gonzalez C.F."/>
            <person name="Konstantinidis K."/>
            <person name="Tiedje J.M."/>
            <person name="Richardson P."/>
        </authorList>
    </citation>
    <scope>NUCLEOTIDE SEQUENCE [LARGE SCALE GENOMIC DNA]</scope>
    <source>
        <strain>HI2424</strain>
    </source>
</reference>
<gene>
    <name evidence="1" type="primary">hisF</name>
    <name type="ordered locus">Bcen2424_0431</name>
</gene>
<sequence length="257" mass="27277">MALAKRIIPCLDVTAGRVVKGVNFVELRDAGDPVEIARRYDDQGADELTFLDITATSDQRDLILPIIEAVASQVFIPLTVGGGVRAVEDVRRLLNAGADKVSMNSSAVANPQLVRDAADKYGSQCIVVAIDAKRVSADGETPRWEVFTHGGRKNTGLDAIEWARKMAELGAGEILLTSMDRDGTKSGFDLALTRGVSDAVPVPVIASGGVGSLQHLADGIKDGRADAVLAASIFHYGEHTVGEAKRFMSDQGIPVRL</sequence>
<keyword id="KW-0028">Amino-acid biosynthesis</keyword>
<keyword id="KW-0963">Cytoplasm</keyword>
<keyword id="KW-0368">Histidine biosynthesis</keyword>
<keyword id="KW-0456">Lyase</keyword>
<proteinExistence type="inferred from homology"/>
<protein>
    <recommendedName>
        <fullName evidence="1">Imidazole glycerol phosphate synthase subunit HisF</fullName>
        <ecNumber evidence="1">4.3.2.10</ecNumber>
    </recommendedName>
    <alternativeName>
        <fullName evidence="1">IGP synthase cyclase subunit</fullName>
    </alternativeName>
    <alternativeName>
        <fullName evidence="1">IGP synthase subunit HisF</fullName>
    </alternativeName>
    <alternativeName>
        <fullName evidence="1">ImGP synthase subunit HisF</fullName>
        <shortName evidence="1">IGPS subunit HisF</shortName>
    </alternativeName>
</protein>